<comment type="function">
    <text evidence="1">Involved in the biosynthesis of lipid A, a phosphorylated glycolipid that anchors the lipopolysaccharide to the outer membrane of the cell.</text>
</comment>
<comment type="catalytic activity">
    <reaction evidence="1">
        <text>a (3R)-hydroxyacyl-[ACP] + UDP-N-acetyl-alpha-D-glucosamine = a UDP-3-O-[(3R)-3-hydroxyacyl]-N-acetyl-alpha-D-glucosamine + holo-[ACP]</text>
        <dbReference type="Rhea" id="RHEA:67812"/>
        <dbReference type="Rhea" id="RHEA-COMP:9685"/>
        <dbReference type="Rhea" id="RHEA-COMP:9945"/>
        <dbReference type="ChEBI" id="CHEBI:57705"/>
        <dbReference type="ChEBI" id="CHEBI:64479"/>
        <dbReference type="ChEBI" id="CHEBI:78827"/>
        <dbReference type="ChEBI" id="CHEBI:173225"/>
        <dbReference type="EC" id="2.3.1.129"/>
    </reaction>
</comment>
<comment type="pathway">
    <text evidence="1">Glycolipid biosynthesis; lipid IV(A) biosynthesis; lipid IV(A) from (3R)-3-hydroxytetradecanoyl-[acyl-carrier-protein] and UDP-N-acetyl-alpha-D-glucosamine: step 1/6.</text>
</comment>
<comment type="subunit">
    <text evidence="1">Homotrimer.</text>
</comment>
<comment type="subcellular location">
    <subcellularLocation>
        <location evidence="1">Cytoplasm</location>
    </subcellularLocation>
</comment>
<comment type="similarity">
    <text evidence="1">Belongs to the transferase hexapeptide repeat family. LpxA subfamily.</text>
</comment>
<comment type="sequence caution" evidence="2">
    <conflict type="erroneous initiation">
        <sequence resource="EMBL-CDS" id="BAC24527"/>
    </conflict>
</comment>
<feature type="chain" id="PRO_0000188075" description="Acyl-[acyl-carrier-protein]--UDP-N-acetylglucosamine O-acyltransferase">
    <location>
        <begin position="1"/>
        <end position="262"/>
    </location>
</feature>
<dbReference type="EC" id="2.3.1.129" evidence="1"/>
<dbReference type="EMBL" id="BA000021">
    <property type="protein sequence ID" value="BAC24527.1"/>
    <property type="status" value="ALT_INIT"/>
    <property type="molecule type" value="Genomic_DNA"/>
</dbReference>
<dbReference type="SMR" id="Q8D2H3"/>
<dbReference type="STRING" id="36870.gene:10368881"/>
<dbReference type="KEGG" id="wbr:lpxA"/>
<dbReference type="eggNOG" id="COG1043">
    <property type="taxonomic scope" value="Bacteria"/>
</dbReference>
<dbReference type="HOGENOM" id="CLU_061249_0_0_6"/>
<dbReference type="OrthoDB" id="9807278at2"/>
<dbReference type="UniPathway" id="UPA00359">
    <property type="reaction ID" value="UER00477"/>
</dbReference>
<dbReference type="Proteomes" id="UP000000562">
    <property type="component" value="Chromosome"/>
</dbReference>
<dbReference type="GO" id="GO:0005737">
    <property type="term" value="C:cytoplasm"/>
    <property type="evidence" value="ECO:0007669"/>
    <property type="project" value="UniProtKB-SubCell"/>
</dbReference>
<dbReference type="GO" id="GO:0016020">
    <property type="term" value="C:membrane"/>
    <property type="evidence" value="ECO:0007669"/>
    <property type="project" value="GOC"/>
</dbReference>
<dbReference type="GO" id="GO:0008780">
    <property type="term" value="F:acyl-[acyl-carrier-protein]-UDP-N-acetylglucosamine O-acyltransferase activity"/>
    <property type="evidence" value="ECO:0007669"/>
    <property type="project" value="UniProtKB-UniRule"/>
</dbReference>
<dbReference type="GO" id="GO:0009245">
    <property type="term" value="P:lipid A biosynthetic process"/>
    <property type="evidence" value="ECO:0007669"/>
    <property type="project" value="UniProtKB-UniRule"/>
</dbReference>
<dbReference type="CDD" id="cd03351">
    <property type="entry name" value="LbH_UDP-GlcNAc_AT"/>
    <property type="match status" value="1"/>
</dbReference>
<dbReference type="Gene3D" id="2.160.10.10">
    <property type="entry name" value="Hexapeptide repeat proteins"/>
    <property type="match status" value="1"/>
</dbReference>
<dbReference type="Gene3D" id="1.20.1180.10">
    <property type="entry name" value="Udp N-acetylglucosamine O-acyltransferase, C-terminal domain"/>
    <property type="match status" value="1"/>
</dbReference>
<dbReference type="HAMAP" id="MF_00387">
    <property type="entry name" value="LpxA"/>
    <property type="match status" value="1"/>
</dbReference>
<dbReference type="InterPro" id="IPR029098">
    <property type="entry name" value="Acetyltransf_C"/>
</dbReference>
<dbReference type="InterPro" id="IPR037157">
    <property type="entry name" value="Acetyltransf_C_sf"/>
</dbReference>
<dbReference type="InterPro" id="IPR001451">
    <property type="entry name" value="Hexapep"/>
</dbReference>
<dbReference type="InterPro" id="IPR018357">
    <property type="entry name" value="Hexapep_transf_CS"/>
</dbReference>
<dbReference type="InterPro" id="IPR010137">
    <property type="entry name" value="Lipid_A_LpxA"/>
</dbReference>
<dbReference type="InterPro" id="IPR011004">
    <property type="entry name" value="Trimer_LpxA-like_sf"/>
</dbReference>
<dbReference type="NCBIfam" id="TIGR01852">
    <property type="entry name" value="lipid_A_lpxA"/>
    <property type="match status" value="1"/>
</dbReference>
<dbReference type="NCBIfam" id="NF003657">
    <property type="entry name" value="PRK05289.1"/>
    <property type="match status" value="1"/>
</dbReference>
<dbReference type="PANTHER" id="PTHR43480">
    <property type="entry name" value="ACYL-[ACYL-CARRIER-PROTEIN]--UDP-N-ACETYLGLUCOSAMINE O-ACYLTRANSFERASE"/>
    <property type="match status" value="1"/>
</dbReference>
<dbReference type="PANTHER" id="PTHR43480:SF1">
    <property type="entry name" value="ACYL-[ACYL-CARRIER-PROTEIN]--UDP-N-ACETYLGLUCOSAMINE O-ACYLTRANSFERASE, MITOCHONDRIAL-RELATED"/>
    <property type="match status" value="1"/>
</dbReference>
<dbReference type="Pfam" id="PF13720">
    <property type="entry name" value="Acetyltransf_11"/>
    <property type="match status" value="1"/>
</dbReference>
<dbReference type="Pfam" id="PF00132">
    <property type="entry name" value="Hexapep"/>
    <property type="match status" value="1"/>
</dbReference>
<dbReference type="PIRSF" id="PIRSF000456">
    <property type="entry name" value="UDP-GlcNAc_acltr"/>
    <property type="match status" value="1"/>
</dbReference>
<dbReference type="SUPFAM" id="SSF51161">
    <property type="entry name" value="Trimeric LpxA-like enzymes"/>
    <property type="match status" value="1"/>
</dbReference>
<dbReference type="PROSITE" id="PS00101">
    <property type="entry name" value="HEXAPEP_TRANSFERASES"/>
    <property type="match status" value="1"/>
</dbReference>
<sequence length="262" mass="29065">MIDKSAYVHPSSIVRKNAIIHANSYVGPFCFIDSQVEIGARTVLKSHVIINGLTYVGEDNFIYQFSSIGEENQDLKYSGENTKVYIGDRNKIRENSTIHRGTVQSNKITKIGNDNLFMVNVHIAHDCVIENNCVMANNVTLGGHVKIGNHVVIGGMTAVHQNCIIGSHVMIGGCSGISQDVPPFILAQGNHAIPFGINFEGLKRRGFDKKTISVIKNAYKIIYKRGNNLNNIKKELIKLSESNKIINLFLDFFSNSSRGFIR</sequence>
<name>LPXA_WIGBR</name>
<gene>
    <name evidence="1" type="primary">lpxA</name>
    <name type="ordered locus">WIGBR3810</name>
</gene>
<protein>
    <recommendedName>
        <fullName evidence="1">Acyl-[acyl-carrier-protein]--UDP-N-acetylglucosamine O-acyltransferase</fullName>
        <shortName evidence="1">UDP-N-acetylglucosamine acyltransferase</shortName>
        <ecNumber evidence="1">2.3.1.129</ecNumber>
    </recommendedName>
</protein>
<proteinExistence type="inferred from homology"/>
<evidence type="ECO:0000255" key="1">
    <source>
        <dbReference type="HAMAP-Rule" id="MF_00387"/>
    </source>
</evidence>
<evidence type="ECO:0000305" key="2"/>
<reference key="1">
    <citation type="journal article" date="2002" name="Nat. Genet.">
        <title>Genome sequence of the endocellular obligate symbiont of tsetse flies, Wigglesworthia glossinidia.</title>
        <authorList>
            <person name="Akman L."/>
            <person name="Yamashita A."/>
            <person name="Watanabe H."/>
            <person name="Oshima K."/>
            <person name="Shiba T."/>
            <person name="Hattori M."/>
            <person name="Aksoy S."/>
        </authorList>
    </citation>
    <scope>NUCLEOTIDE SEQUENCE [LARGE SCALE GENOMIC DNA]</scope>
</reference>
<accession>Q8D2H3</accession>
<keyword id="KW-0012">Acyltransferase</keyword>
<keyword id="KW-0963">Cytoplasm</keyword>
<keyword id="KW-0441">Lipid A biosynthesis</keyword>
<keyword id="KW-0444">Lipid biosynthesis</keyword>
<keyword id="KW-0443">Lipid metabolism</keyword>
<keyword id="KW-1185">Reference proteome</keyword>
<keyword id="KW-0677">Repeat</keyword>
<keyword id="KW-0808">Transferase</keyword>
<organism>
    <name type="scientific">Wigglesworthia glossinidia brevipalpis</name>
    <dbReference type="NCBI Taxonomy" id="36870"/>
    <lineage>
        <taxon>Bacteria</taxon>
        <taxon>Pseudomonadati</taxon>
        <taxon>Pseudomonadota</taxon>
        <taxon>Gammaproteobacteria</taxon>
        <taxon>Enterobacterales</taxon>
        <taxon>Erwiniaceae</taxon>
        <taxon>Wigglesworthia</taxon>
    </lineage>
</organism>